<dbReference type="EC" id="2.5.1.39" evidence="1"/>
<dbReference type="EMBL" id="CP000503">
    <property type="protein sequence ID" value="ABM23420.1"/>
    <property type="molecule type" value="Genomic_DNA"/>
</dbReference>
<dbReference type="RefSeq" id="WP_011787952.1">
    <property type="nucleotide sequence ID" value="NC_008750.1"/>
</dbReference>
<dbReference type="SMR" id="A1RFH5"/>
<dbReference type="GeneID" id="67444951"/>
<dbReference type="KEGG" id="shw:Sputw3181_0569"/>
<dbReference type="HOGENOM" id="CLU_034879_1_0_6"/>
<dbReference type="UniPathway" id="UPA00232"/>
<dbReference type="Proteomes" id="UP000002597">
    <property type="component" value="Chromosome"/>
</dbReference>
<dbReference type="GO" id="GO:0005886">
    <property type="term" value="C:plasma membrane"/>
    <property type="evidence" value="ECO:0007669"/>
    <property type="project" value="UniProtKB-SubCell"/>
</dbReference>
<dbReference type="GO" id="GO:0008412">
    <property type="term" value="F:4-hydroxybenzoate polyprenyltransferase activity"/>
    <property type="evidence" value="ECO:0007669"/>
    <property type="project" value="UniProtKB-UniRule"/>
</dbReference>
<dbReference type="GO" id="GO:0006744">
    <property type="term" value="P:ubiquinone biosynthetic process"/>
    <property type="evidence" value="ECO:0007669"/>
    <property type="project" value="UniProtKB-UniRule"/>
</dbReference>
<dbReference type="CDD" id="cd13959">
    <property type="entry name" value="PT_UbiA_COQ2"/>
    <property type="match status" value="1"/>
</dbReference>
<dbReference type="FunFam" id="1.10.357.140:FF:000002">
    <property type="entry name" value="4-hydroxybenzoate octaprenyltransferase"/>
    <property type="match status" value="1"/>
</dbReference>
<dbReference type="FunFam" id="1.20.120.1780:FF:000001">
    <property type="entry name" value="4-hydroxybenzoate octaprenyltransferase"/>
    <property type="match status" value="1"/>
</dbReference>
<dbReference type="Gene3D" id="1.10.357.140">
    <property type="entry name" value="UbiA prenyltransferase"/>
    <property type="match status" value="1"/>
</dbReference>
<dbReference type="Gene3D" id="1.20.120.1780">
    <property type="entry name" value="UbiA prenyltransferase"/>
    <property type="match status" value="1"/>
</dbReference>
<dbReference type="HAMAP" id="MF_01635">
    <property type="entry name" value="UbiA"/>
    <property type="match status" value="1"/>
</dbReference>
<dbReference type="InterPro" id="IPR006370">
    <property type="entry name" value="HB_polyprenyltransferase-like"/>
</dbReference>
<dbReference type="InterPro" id="IPR039653">
    <property type="entry name" value="Prenyltransferase"/>
</dbReference>
<dbReference type="InterPro" id="IPR000537">
    <property type="entry name" value="UbiA_prenyltransferase"/>
</dbReference>
<dbReference type="InterPro" id="IPR030470">
    <property type="entry name" value="UbiA_prenylTrfase_CS"/>
</dbReference>
<dbReference type="InterPro" id="IPR044878">
    <property type="entry name" value="UbiA_sf"/>
</dbReference>
<dbReference type="NCBIfam" id="TIGR01474">
    <property type="entry name" value="ubiA_proteo"/>
    <property type="match status" value="1"/>
</dbReference>
<dbReference type="PANTHER" id="PTHR11048:SF28">
    <property type="entry name" value="4-HYDROXYBENZOATE POLYPRENYLTRANSFERASE, MITOCHONDRIAL"/>
    <property type="match status" value="1"/>
</dbReference>
<dbReference type="PANTHER" id="PTHR11048">
    <property type="entry name" value="PRENYLTRANSFERASES"/>
    <property type="match status" value="1"/>
</dbReference>
<dbReference type="Pfam" id="PF01040">
    <property type="entry name" value="UbiA"/>
    <property type="match status" value="1"/>
</dbReference>
<dbReference type="PROSITE" id="PS00943">
    <property type="entry name" value="UBIA"/>
    <property type="match status" value="1"/>
</dbReference>
<organism>
    <name type="scientific">Shewanella sp. (strain W3-18-1)</name>
    <dbReference type="NCBI Taxonomy" id="351745"/>
    <lineage>
        <taxon>Bacteria</taxon>
        <taxon>Pseudomonadati</taxon>
        <taxon>Pseudomonadota</taxon>
        <taxon>Gammaproteobacteria</taxon>
        <taxon>Alteromonadales</taxon>
        <taxon>Shewanellaceae</taxon>
        <taxon>Shewanella</taxon>
    </lineage>
</organism>
<gene>
    <name evidence="1" type="primary">ubiA</name>
    <name type="ordered locus">Sputw3181_0569</name>
</gene>
<evidence type="ECO:0000255" key="1">
    <source>
        <dbReference type="HAMAP-Rule" id="MF_01635"/>
    </source>
</evidence>
<reference key="1">
    <citation type="submission" date="2006-12" db="EMBL/GenBank/DDBJ databases">
        <title>Complete sequence of Shewanella sp. W3-18-1.</title>
        <authorList>
            <consortium name="US DOE Joint Genome Institute"/>
            <person name="Copeland A."/>
            <person name="Lucas S."/>
            <person name="Lapidus A."/>
            <person name="Barry K."/>
            <person name="Detter J.C."/>
            <person name="Glavina del Rio T."/>
            <person name="Hammon N."/>
            <person name="Israni S."/>
            <person name="Dalin E."/>
            <person name="Tice H."/>
            <person name="Pitluck S."/>
            <person name="Chain P."/>
            <person name="Malfatti S."/>
            <person name="Shin M."/>
            <person name="Vergez L."/>
            <person name="Schmutz J."/>
            <person name="Larimer F."/>
            <person name="Land M."/>
            <person name="Hauser L."/>
            <person name="Kyrpides N."/>
            <person name="Lykidis A."/>
            <person name="Tiedje J."/>
            <person name="Richardson P."/>
        </authorList>
    </citation>
    <scope>NUCLEOTIDE SEQUENCE [LARGE SCALE GENOMIC DNA]</scope>
    <source>
        <strain>W3-18-1</strain>
    </source>
</reference>
<name>UBIA_SHESW</name>
<feature type="chain" id="PRO_1000088188" description="4-hydroxybenzoate octaprenyltransferase">
    <location>
        <begin position="1"/>
        <end position="286"/>
    </location>
</feature>
<feature type="transmembrane region" description="Helical" evidence="1">
    <location>
        <begin position="21"/>
        <end position="40"/>
    </location>
</feature>
<feature type="transmembrane region" description="Helical" evidence="1">
    <location>
        <begin position="95"/>
        <end position="115"/>
    </location>
</feature>
<feature type="transmembrane region" description="Helical" evidence="1">
    <location>
        <begin position="142"/>
        <end position="162"/>
    </location>
</feature>
<feature type="transmembrane region" description="Helical" evidence="1">
    <location>
        <begin position="167"/>
        <end position="187"/>
    </location>
</feature>
<feature type="transmembrane region" description="Helical" evidence="1">
    <location>
        <begin position="211"/>
        <end position="231"/>
    </location>
</feature>
<feature type="transmembrane region" description="Helical" evidence="1">
    <location>
        <begin position="235"/>
        <end position="255"/>
    </location>
</feature>
<feature type="transmembrane region" description="Helical" evidence="1">
    <location>
        <begin position="266"/>
        <end position="286"/>
    </location>
</feature>
<protein>
    <recommendedName>
        <fullName evidence="1">4-hydroxybenzoate octaprenyltransferase</fullName>
        <ecNumber evidence="1">2.5.1.39</ecNumber>
    </recommendedName>
    <alternativeName>
        <fullName evidence="1">4-HB polyprenyltransferase</fullName>
    </alternativeName>
</protein>
<comment type="function">
    <text evidence="1">Catalyzes the prenylation of para-hydroxybenzoate (PHB) with an all-trans polyprenyl group. Mediates the second step in the final reaction sequence of ubiquinone-8 (UQ-8) biosynthesis, which is the condensation of the polyisoprenoid side chain with PHB, generating the first membrane-bound Q intermediate 3-octaprenyl-4-hydroxybenzoate.</text>
</comment>
<comment type="catalytic activity">
    <reaction evidence="1">
        <text>all-trans-octaprenyl diphosphate + 4-hydroxybenzoate = 4-hydroxy-3-(all-trans-octaprenyl)benzoate + diphosphate</text>
        <dbReference type="Rhea" id="RHEA:27782"/>
        <dbReference type="ChEBI" id="CHEBI:1617"/>
        <dbReference type="ChEBI" id="CHEBI:17879"/>
        <dbReference type="ChEBI" id="CHEBI:33019"/>
        <dbReference type="ChEBI" id="CHEBI:57711"/>
        <dbReference type="EC" id="2.5.1.39"/>
    </reaction>
</comment>
<comment type="cofactor">
    <cofactor evidence="1">
        <name>Mg(2+)</name>
        <dbReference type="ChEBI" id="CHEBI:18420"/>
    </cofactor>
</comment>
<comment type="pathway">
    <text evidence="1">Cofactor biosynthesis; ubiquinone biosynthesis.</text>
</comment>
<comment type="subcellular location">
    <subcellularLocation>
        <location evidence="1">Cell inner membrane</location>
        <topology evidence="1">Multi-pass membrane protein</topology>
    </subcellularLocation>
</comment>
<comment type="similarity">
    <text evidence="1">Belongs to the UbiA prenyltransferase family.</text>
</comment>
<keyword id="KW-0997">Cell inner membrane</keyword>
<keyword id="KW-1003">Cell membrane</keyword>
<keyword id="KW-0460">Magnesium</keyword>
<keyword id="KW-0472">Membrane</keyword>
<keyword id="KW-0808">Transferase</keyword>
<keyword id="KW-0812">Transmembrane</keyword>
<keyword id="KW-1133">Transmembrane helix</keyword>
<keyword id="KW-0831">Ubiquinone biosynthesis</keyword>
<proteinExistence type="inferred from homology"/>
<sequence>MNLKQKWDVYSRLTRLDRPIGTLLLMWPCLMALMLAAGGMPDLKVLIIFIIGVVIMRACGCIINDYADRDLDSFVERTKSRPLASGEISTKEALILFVVLGLSAFGLVLLLNGLVVKLSVVGIILTIIYPFTKRITNMPQMFLGVVWSWSIPMAYAAQTGEVPMEAWWLFAANWFWTVAYDTMYAMVDRDDDLKVGIKSTAILFGKYDRQIIGLFQIAALVCFIAAGWSAERGLLYGLGLLTFVGFSTYQQMLIFGRERAPCFKAFLNNNWAGLALFVGLGADYLI</sequence>
<accession>A1RFH5</accession>